<name>RRF_CHRFK</name>
<gene>
    <name evidence="1" type="primary">frr</name>
    <name type="ordered locus">GFO_0099</name>
</gene>
<organism>
    <name type="scientific">Christiangramia forsetii (strain DSM 17595 / CGMCC 1.15422 / KT0803)</name>
    <name type="common">Gramella forsetii</name>
    <dbReference type="NCBI Taxonomy" id="411154"/>
    <lineage>
        <taxon>Bacteria</taxon>
        <taxon>Pseudomonadati</taxon>
        <taxon>Bacteroidota</taxon>
        <taxon>Flavobacteriia</taxon>
        <taxon>Flavobacteriales</taxon>
        <taxon>Flavobacteriaceae</taxon>
        <taxon>Christiangramia</taxon>
    </lineage>
</organism>
<protein>
    <recommendedName>
        <fullName evidence="1">Ribosome-recycling factor</fullName>
        <shortName evidence="1">RRF</shortName>
    </recommendedName>
    <alternativeName>
        <fullName evidence="1">Ribosome-releasing factor</fullName>
    </alternativeName>
</protein>
<accession>A0LXJ3</accession>
<dbReference type="EMBL" id="CU207366">
    <property type="protein sequence ID" value="CAL65088.1"/>
    <property type="molecule type" value="Genomic_DNA"/>
</dbReference>
<dbReference type="RefSeq" id="WP_011708026.1">
    <property type="nucleotide sequence ID" value="NC_008571.1"/>
</dbReference>
<dbReference type="SMR" id="A0LXJ3"/>
<dbReference type="STRING" id="411154.GFO_0099"/>
<dbReference type="KEGG" id="gfo:GFO_0099"/>
<dbReference type="eggNOG" id="COG0233">
    <property type="taxonomic scope" value="Bacteria"/>
</dbReference>
<dbReference type="HOGENOM" id="CLU_073981_2_0_10"/>
<dbReference type="OrthoDB" id="9804006at2"/>
<dbReference type="Proteomes" id="UP000000755">
    <property type="component" value="Chromosome"/>
</dbReference>
<dbReference type="GO" id="GO:0005737">
    <property type="term" value="C:cytoplasm"/>
    <property type="evidence" value="ECO:0007669"/>
    <property type="project" value="UniProtKB-SubCell"/>
</dbReference>
<dbReference type="GO" id="GO:0043023">
    <property type="term" value="F:ribosomal large subunit binding"/>
    <property type="evidence" value="ECO:0007669"/>
    <property type="project" value="TreeGrafter"/>
</dbReference>
<dbReference type="GO" id="GO:0006415">
    <property type="term" value="P:translational termination"/>
    <property type="evidence" value="ECO:0007669"/>
    <property type="project" value="UniProtKB-UniRule"/>
</dbReference>
<dbReference type="CDD" id="cd00520">
    <property type="entry name" value="RRF"/>
    <property type="match status" value="1"/>
</dbReference>
<dbReference type="FunFam" id="1.10.132.20:FF:000001">
    <property type="entry name" value="Ribosome-recycling factor"/>
    <property type="match status" value="1"/>
</dbReference>
<dbReference type="FunFam" id="3.30.1360.40:FF:000001">
    <property type="entry name" value="Ribosome-recycling factor"/>
    <property type="match status" value="1"/>
</dbReference>
<dbReference type="Gene3D" id="3.30.1360.40">
    <property type="match status" value="1"/>
</dbReference>
<dbReference type="Gene3D" id="1.10.132.20">
    <property type="entry name" value="Ribosome-recycling factor"/>
    <property type="match status" value="1"/>
</dbReference>
<dbReference type="HAMAP" id="MF_00040">
    <property type="entry name" value="RRF"/>
    <property type="match status" value="1"/>
</dbReference>
<dbReference type="InterPro" id="IPR002661">
    <property type="entry name" value="Ribosome_recyc_fac"/>
</dbReference>
<dbReference type="InterPro" id="IPR023584">
    <property type="entry name" value="Ribosome_recyc_fac_dom"/>
</dbReference>
<dbReference type="InterPro" id="IPR036191">
    <property type="entry name" value="RRF_sf"/>
</dbReference>
<dbReference type="NCBIfam" id="TIGR00496">
    <property type="entry name" value="frr"/>
    <property type="match status" value="1"/>
</dbReference>
<dbReference type="PANTHER" id="PTHR20982:SF3">
    <property type="entry name" value="MITOCHONDRIAL RIBOSOME RECYCLING FACTOR PSEUDO 1"/>
    <property type="match status" value="1"/>
</dbReference>
<dbReference type="PANTHER" id="PTHR20982">
    <property type="entry name" value="RIBOSOME RECYCLING FACTOR"/>
    <property type="match status" value="1"/>
</dbReference>
<dbReference type="Pfam" id="PF01765">
    <property type="entry name" value="RRF"/>
    <property type="match status" value="1"/>
</dbReference>
<dbReference type="SUPFAM" id="SSF55194">
    <property type="entry name" value="Ribosome recycling factor, RRF"/>
    <property type="match status" value="1"/>
</dbReference>
<keyword id="KW-0963">Cytoplasm</keyword>
<keyword id="KW-0648">Protein biosynthesis</keyword>
<sequence>MDEVEFILEEAKEGMEKAITHLKKQLSNIRAGKASPSMLGSVMVEYYGSQTPLQQVANVNTPDARTLSIQPFEKSLITEIERGIMLANLGFNPMNNGESVIINVPPLTEERRKQLSKQAKAEAEDAKVGVRNDRKQAMQELKKADISEDLLKSSEDEVQELTNTYIERIDKILTVKETEIMTV</sequence>
<reference key="1">
    <citation type="journal article" date="2006" name="Environ. Microbiol.">
        <title>Whole genome analysis of the marine Bacteroidetes'Gramella forsetii' reveals adaptations to degradation of polymeric organic matter.</title>
        <authorList>
            <person name="Bauer M."/>
            <person name="Kube M."/>
            <person name="Teeling H."/>
            <person name="Richter M."/>
            <person name="Lombardot T."/>
            <person name="Allers E."/>
            <person name="Wuerdemann C.A."/>
            <person name="Quast C."/>
            <person name="Kuhl H."/>
            <person name="Knaust F."/>
            <person name="Woebken D."/>
            <person name="Bischof K."/>
            <person name="Mussmann M."/>
            <person name="Choudhuri J.V."/>
            <person name="Meyer F."/>
            <person name="Reinhardt R."/>
            <person name="Amann R.I."/>
            <person name="Gloeckner F.O."/>
        </authorList>
    </citation>
    <scope>NUCLEOTIDE SEQUENCE [LARGE SCALE GENOMIC DNA]</scope>
    <source>
        <strain>DSM 17595 / CGMCC 1.15422 / KT0803</strain>
    </source>
</reference>
<evidence type="ECO:0000255" key="1">
    <source>
        <dbReference type="HAMAP-Rule" id="MF_00040"/>
    </source>
</evidence>
<feature type="chain" id="PRO_1000003172" description="Ribosome-recycling factor">
    <location>
        <begin position="1"/>
        <end position="183"/>
    </location>
</feature>
<comment type="function">
    <text evidence="1">Responsible for the release of ribosomes from messenger RNA at the termination of protein biosynthesis. May increase the efficiency of translation by recycling ribosomes from one round of translation to another.</text>
</comment>
<comment type="subcellular location">
    <subcellularLocation>
        <location evidence="1">Cytoplasm</location>
    </subcellularLocation>
</comment>
<comment type="similarity">
    <text evidence="1">Belongs to the RRF family.</text>
</comment>
<proteinExistence type="inferred from homology"/>